<keyword id="KW-1003">Cell membrane</keyword>
<keyword id="KW-0406">Ion transport</keyword>
<keyword id="KW-0464">Manganese</keyword>
<keyword id="KW-0472">Membrane</keyword>
<keyword id="KW-1185">Reference proteome</keyword>
<keyword id="KW-0812">Transmembrane</keyword>
<keyword id="KW-1133">Transmembrane helix</keyword>
<keyword id="KW-0813">Transport</keyword>
<accession>Q5KUH7</accession>
<proteinExistence type="inferred from homology"/>
<gene>
    <name evidence="1" type="primary">mntP</name>
    <name type="ordered locus">GK3374</name>
</gene>
<organism>
    <name type="scientific">Geobacillus kaustophilus (strain HTA426)</name>
    <dbReference type="NCBI Taxonomy" id="235909"/>
    <lineage>
        <taxon>Bacteria</taxon>
        <taxon>Bacillati</taxon>
        <taxon>Bacillota</taxon>
        <taxon>Bacilli</taxon>
        <taxon>Bacillales</taxon>
        <taxon>Anoxybacillaceae</taxon>
        <taxon>Geobacillus</taxon>
        <taxon>Geobacillus thermoleovorans group</taxon>
    </lineage>
</organism>
<reference key="1">
    <citation type="journal article" date="2004" name="Nucleic Acids Res.">
        <title>Thermoadaptation trait revealed by the genome sequence of thermophilic Geobacillus kaustophilus.</title>
        <authorList>
            <person name="Takami H."/>
            <person name="Takaki Y."/>
            <person name="Chee G.-J."/>
            <person name="Nishi S."/>
            <person name="Shimamura S."/>
            <person name="Suzuki H."/>
            <person name="Matsui S."/>
            <person name="Uchiyama I."/>
        </authorList>
    </citation>
    <scope>NUCLEOTIDE SEQUENCE [LARGE SCALE GENOMIC DNA]</scope>
    <source>
        <strain>HTA426</strain>
    </source>
</reference>
<name>MNTP_GEOKA</name>
<comment type="function">
    <text evidence="1">Probably functions as a manganese efflux pump.</text>
</comment>
<comment type="subcellular location">
    <subcellularLocation>
        <location evidence="1">Cell membrane</location>
        <topology evidence="1">Multi-pass membrane protein</topology>
    </subcellularLocation>
</comment>
<comment type="similarity">
    <text evidence="1">Belongs to the MntP (TC 9.B.29) family.</text>
</comment>
<sequence length="183" mass="19687">MGAFIGEIIALSMMALALGMDAFSVALGMGLLRLRLRQMFYIGLTIGLFHILMPLAGMAVGRLLSREFGSVATYAGGALLLWLGGQMIIASFRRDDGSPLFPRGVGLLFFAFSVSLDSFSVGLSLGIFGARTMVTILLFGLFSMVLTWVGLFVGRHFQQWLGSYSEALGGSILLAFGLKLLFL</sequence>
<protein>
    <recommendedName>
        <fullName evidence="1">Putative manganese efflux pump MntP</fullName>
    </recommendedName>
</protein>
<feature type="chain" id="PRO_0000155654" description="Putative manganese efflux pump MntP">
    <location>
        <begin position="1"/>
        <end position="183"/>
    </location>
</feature>
<feature type="transmembrane region" description="Helical" evidence="1">
    <location>
        <begin position="8"/>
        <end position="28"/>
    </location>
</feature>
<feature type="transmembrane region" description="Helical" evidence="1">
    <location>
        <begin position="40"/>
        <end position="60"/>
    </location>
</feature>
<feature type="transmembrane region" description="Helical" evidence="1">
    <location>
        <begin position="72"/>
        <end position="92"/>
    </location>
</feature>
<feature type="transmembrane region" description="Helical" evidence="1">
    <location>
        <begin position="108"/>
        <end position="128"/>
    </location>
</feature>
<feature type="transmembrane region" description="Helical" evidence="1">
    <location>
        <begin position="133"/>
        <end position="153"/>
    </location>
</feature>
<feature type="transmembrane region" description="Helical" evidence="1">
    <location>
        <begin position="163"/>
        <end position="183"/>
    </location>
</feature>
<evidence type="ECO:0000255" key="1">
    <source>
        <dbReference type="HAMAP-Rule" id="MF_01521"/>
    </source>
</evidence>
<dbReference type="EMBL" id="BA000043">
    <property type="protein sequence ID" value="BAD77659.1"/>
    <property type="molecule type" value="Genomic_DNA"/>
</dbReference>
<dbReference type="RefSeq" id="WP_011232841.1">
    <property type="nucleotide sequence ID" value="NC_006510.1"/>
</dbReference>
<dbReference type="STRING" id="235909.GK3374"/>
<dbReference type="KEGG" id="gka:GK3374"/>
<dbReference type="eggNOG" id="COG1971">
    <property type="taxonomic scope" value="Bacteria"/>
</dbReference>
<dbReference type="HOGENOM" id="CLU_096410_1_0_9"/>
<dbReference type="Proteomes" id="UP000001172">
    <property type="component" value="Chromosome"/>
</dbReference>
<dbReference type="GO" id="GO:0005886">
    <property type="term" value="C:plasma membrane"/>
    <property type="evidence" value="ECO:0007669"/>
    <property type="project" value="UniProtKB-SubCell"/>
</dbReference>
<dbReference type="GO" id="GO:0005384">
    <property type="term" value="F:manganese ion transmembrane transporter activity"/>
    <property type="evidence" value="ECO:0007669"/>
    <property type="project" value="UniProtKB-UniRule"/>
</dbReference>
<dbReference type="HAMAP" id="MF_01521">
    <property type="entry name" value="MntP_pump"/>
    <property type="match status" value="1"/>
</dbReference>
<dbReference type="InterPro" id="IPR003810">
    <property type="entry name" value="Mntp/YtaF"/>
</dbReference>
<dbReference type="InterPro" id="IPR022929">
    <property type="entry name" value="Put_MntP"/>
</dbReference>
<dbReference type="PANTHER" id="PTHR35529">
    <property type="entry name" value="MANGANESE EFFLUX PUMP MNTP-RELATED"/>
    <property type="match status" value="1"/>
</dbReference>
<dbReference type="PANTHER" id="PTHR35529:SF1">
    <property type="entry name" value="MANGANESE EFFLUX PUMP MNTP-RELATED"/>
    <property type="match status" value="1"/>
</dbReference>
<dbReference type="Pfam" id="PF02659">
    <property type="entry name" value="Mntp"/>
    <property type="match status" value="1"/>
</dbReference>